<comment type="function">
    <text evidence="1">Component of the proteasome core, a large protease complex with broad specificity involved in protein degradation.</text>
</comment>
<comment type="activity regulation">
    <text evidence="1">The formation of the proteasomal ATPase PAN-20S proteasome complex, via the docking of the C-termini of PAN into the intersubunit pockets in the alpha-rings, triggers opening of the gate for substrate entry. Interconversion between the open-gate and close-gate conformations leads to a dynamic regulation of the 20S proteasome proteolysis activity.</text>
</comment>
<comment type="subunit">
    <text evidence="1">The 20S proteasome core is composed of 14 alpha and 14 beta subunits that assemble into four stacked heptameric rings, resulting in a barrel-shaped structure. The two inner rings, each composed of seven catalytic beta subunits, are sandwiched by two outer rings, each composed of seven alpha subunits. The catalytic chamber with the active sites is on the inside of the barrel. Has a gated structure, the ends of the cylinder being occluded by the N-termini of the alpha-subunits. Is capped at one or both ends by the proteasome regulatory ATPase, PAN.</text>
</comment>
<comment type="subcellular location">
    <subcellularLocation>
        <location evidence="1">Cytoplasm</location>
    </subcellularLocation>
</comment>
<comment type="similarity">
    <text evidence="1">Belongs to the peptidase T1A family.</text>
</comment>
<name>PSA_METS3</name>
<protein>
    <recommendedName>
        <fullName evidence="1">Proteasome subunit alpha</fullName>
    </recommendedName>
    <alternativeName>
        <fullName evidence="1">20S proteasome alpha subunit</fullName>
    </alternativeName>
    <alternativeName>
        <fullName evidence="1">Proteasome core protein PsmA</fullName>
    </alternativeName>
</protein>
<organism>
    <name type="scientific">Methanobrevibacter smithii (strain ATCC 35061 / DSM 861 / OCM 144 / PS)</name>
    <dbReference type="NCBI Taxonomy" id="420247"/>
    <lineage>
        <taxon>Archaea</taxon>
        <taxon>Methanobacteriati</taxon>
        <taxon>Methanobacteriota</taxon>
        <taxon>Methanomada group</taxon>
        <taxon>Methanobacteria</taxon>
        <taxon>Methanobacteriales</taxon>
        <taxon>Methanobacteriaceae</taxon>
        <taxon>Methanobrevibacter</taxon>
    </lineage>
</organism>
<keyword id="KW-0963">Cytoplasm</keyword>
<keyword id="KW-0647">Proteasome</keyword>
<reference key="1">
    <citation type="journal article" date="2007" name="Proc. Natl. Acad. Sci. U.S.A.">
        <title>Genomic and metabolic adaptations of Methanobrevibacter smithii to the human gut.</title>
        <authorList>
            <person name="Samuel B.S."/>
            <person name="Hansen E.E."/>
            <person name="Manchester J.K."/>
            <person name="Coutinho P.M."/>
            <person name="Henrissat B."/>
            <person name="Fulton R."/>
            <person name="Latreille P."/>
            <person name="Kim K."/>
            <person name="Wilson R.K."/>
            <person name="Gordon J.I."/>
        </authorList>
    </citation>
    <scope>NUCLEOTIDE SEQUENCE [LARGE SCALE GENOMIC DNA]</scope>
    <source>
        <strain>ATCC 35061 / DSM 861 / OCM 144 / PS</strain>
    </source>
</reference>
<dbReference type="EMBL" id="CP000678">
    <property type="protein sequence ID" value="ABQ86450.1"/>
    <property type="molecule type" value="Genomic_DNA"/>
</dbReference>
<dbReference type="RefSeq" id="WP_004034323.1">
    <property type="nucleotide sequence ID" value="NZ_CP117965.1"/>
</dbReference>
<dbReference type="SMR" id="A5UJS2"/>
<dbReference type="STRING" id="420247.Msm_0245"/>
<dbReference type="EnsemblBacteria" id="ABQ86450">
    <property type="protein sequence ID" value="ABQ86450"/>
    <property type="gene ID" value="Msm_0245"/>
</dbReference>
<dbReference type="GeneID" id="78816868"/>
<dbReference type="KEGG" id="msi:Msm_0245"/>
<dbReference type="PATRIC" id="fig|420247.28.peg.248"/>
<dbReference type="eggNOG" id="arCOG00971">
    <property type="taxonomic scope" value="Archaea"/>
</dbReference>
<dbReference type="HOGENOM" id="CLU_035750_4_1_2"/>
<dbReference type="Proteomes" id="UP000001992">
    <property type="component" value="Chromosome"/>
</dbReference>
<dbReference type="GO" id="GO:0005737">
    <property type="term" value="C:cytoplasm"/>
    <property type="evidence" value="ECO:0007669"/>
    <property type="project" value="UniProtKB-SubCell"/>
</dbReference>
<dbReference type="GO" id="GO:0019773">
    <property type="term" value="C:proteasome core complex, alpha-subunit complex"/>
    <property type="evidence" value="ECO:0000250"/>
    <property type="project" value="UniProtKB"/>
</dbReference>
<dbReference type="GO" id="GO:0004298">
    <property type="term" value="F:threonine-type endopeptidase activity"/>
    <property type="evidence" value="ECO:0007669"/>
    <property type="project" value="InterPro"/>
</dbReference>
<dbReference type="GO" id="GO:0010498">
    <property type="term" value="P:proteasomal protein catabolic process"/>
    <property type="evidence" value="ECO:0007669"/>
    <property type="project" value="UniProtKB-UniRule"/>
</dbReference>
<dbReference type="GO" id="GO:0006511">
    <property type="term" value="P:ubiquitin-dependent protein catabolic process"/>
    <property type="evidence" value="ECO:0007669"/>
    <property type="project" value="InterPro"/>
</dbReference>
<dbReference type="CDD" id="cd03756">
    <property type="entry name" value="proteasome_alpha_archeal"/>
    <property type="match status" value="1"/>
</dbReference>
<dbReference type="FunFam" id="3.60.20.10:FF:000004">
    <property type="entry name" value="Proteasome subunit alpha type-4"/>
    <property type="match status" value="1"/>
</dbReference>
<dbReference type="Gene3D" id="3.60.20.10">
    <property type="entry name" value="Glutamine Phosphoribosylpyrophosphate, subunit 1, domain 1"/>
    <property type="match status" value="1"/>
</dbReference>
<dbReference type="HAMAP" id="MF_00289_A">
    <property type="entry name" value="Proteasome_A_A"/>
    <property type="match status" value="1"/>
</dbReference>
<dbReference type="InterPro" id="IPR029055">
    <property type="entry name" value="Ntn_hydrolases_N"/>
</dbReference>
<dbReference type="InterPro" id="IPR050115">
    <property type="entry name" value="Proteasome_alpha"/>
</dbReference>
<dbReference type="InterPro" id="IPR023332">
    <property type="entry name" value="Proteasome_alpha-type"/>
</dbReference>
<dbReference type="InterPro" id="IPR019982">
    <property type="entry name" value="Proteasome_asu_arc"/>
</dbReference>
<dbReference type="InterPro" id="IPR000426">
    <property type="entry name" value="Proteasome_asu_N"/>
</dbReference>
<dbReference type="InterPro" id="IPR001353">
    <property type="entry name" value="Proteasome_sua/b"/>
</dbReference>
<dbReference type="NCBIfam" id="TIGR03633">
    <property type="entry name" value="arc_protsome_A"/>
    <property type="match status" value="1"/>
</dbReference>
<dbReference type="NCBIfam" id="NF003075">
    <property type="entry name" value="PRK03996.1"/>
    <property type="match status" value="1"/>
</dbReference>
<dbReference type="PANTHER" id="PTHR11599">
    <property type="entry name" value="PROTEASOME SUBUNIT ALPHA/BETA"/>
    <property type="match status" value="1"/>
</dbReference>
<dbReference type="Pfam" id="PF00227">
    <property type="entry name" value="Proteasome"/>
    <property type="match status" value="1"/>
</dbReference>
<dbReference type="Pfam" id="PF10584">
    <property type="entry name" value="Proteasome_A_N"/>
    <property type="match status" value="1"/>
</dbReference>
<dbReference type="SMART" id="SM00948">
    <property type="entry name" value="Proteasome_A_N"/>
    <property type="match status" value="1"/>
</dbReference>
<dbReference type="SUPFAM" id="SSF56235">
    <property type="entry name" value="N-terminal nucleophile aminohydrolases (Ntn hydrolases)"/>
    <property type="match status" value="1"/>
</dbReference>
<dbReference type="PROSITE" id="PS00388">
    <property type="entry name" value="PROTEASOME_ALPHA_1"/>
    <property type="match status" value="1"/>
</dbReference>
<dbReference type="PROSITE" id="PS51475">
    <property type="entry name" value="PROTEASOME_ALPHA_2"/>
    <property type="match status" value="1"/>
</dbReference>
<gene>
    <name evidence="1" type="primary">psmA</name>
    <name type="ordered locus">Msm_0245</name>
</gene>
<proteinExistence type="inferred from homology"/>
<feature type="chain" id="PRO_1000021791" description="Proteasome subunit alpha">
    <location>
        <begin position="1"/>
        <end position="250"/>
    </location>
</feature>
<accession>A5UJS2</accession>
<sequence length="250" mass="27376">MQPLQNAGYDRAITVFSPDGRLFQVEYAREAVKRGTTSIGIKCSEGIVLAVDKRTTSNLVEATSIEKIFKIDEHIGAATSGLVADARALVERARVEAQINKITYSEPIRVDSLSKKLCDMLQMYTQNGGVRPFGSALIIGGVYDGICKLFETDPSGALIEYKATAIGSGRSAAMDIFEDQYKDDMNLNEAINLALTAINEATEHETTANNVEIAVIKCGEEVYTKLSQEEVQTFIDEVVSEEESEEESEE</sequence>
<evidence type="ECO:0000255" key="1">
    <source>
        <dbReference type="HAMAP-Rule" id="MF_00289"/>
    </source>
</evidence>